<feature type="chain" id="PRO_0000386259" description="GTPase Obg">
    <location>
        <begin position="1"/>
        <end position="390"/>
    </location>
</feature>
<feature type="domain" description="Obg" evidence="2">
    <location>
        <begin position="1"/>
        <end position="159"/>
    </location>
</feature>
<feature type="domain" description="OBG-type G" evidence="1">
    <location>
        <begin position="160"/>
        <end position="333"/>
    </location>
</feature>
<feature type="region of interest" description="Disordered" evidence="3">
    <location>
        <begin position="127"/>
        <end position="147"/>
    </location>
</feature>
<feature type="compositionally biased region" description="Polar residues" evidence="3">
    <location>
        <begin position="129"/>
        <end position="145"/>
    </location>
</feature>
<feature type="binding site" evidence="1">
    <location>
        <begin position="166"/>
        <end position="173"/>
    </location>
    <ligand>
        <name>GTP</name>
        <dbReference type="ChEBI" id="CHEBI:37565"/>
    </ligand>
</feature>
<feature type="binding site" evidence="1">
    <location>
        <position position="173"/>
    </location>
    <ligand>
        <name>Mg(2+)</name>
        <dbReference type="ChEBI" id="CHEBI:18420"/>
    </ligand>
</feature>
<feature type="binding site" evidence="1">
    <location>
        <begin position="191"/>
        <end position="195"/>
    </location>
    <ligand>
        <name>GTP</name>
        <dbReference type="ChEBI" id="CHEBI:37565"/>
    </ligand>
</feature>
<feature type="binding site" evidence="1">
    <location>
        <position position="193"/>
    </location>
    <ligand>
        <name>Mg(2+)</name>
        <dbReference type="ChEBI" id="CHEBI:18420"/>
    </ligand>
</feature>
<feature type="binding site" evidence="1">
    <location>
        <begin position="213"/>
        <end position="216"/>
    </location>
    <ligand>
        <name>GTP</name>
        <dbReference type="ChEBI" id="CHEBI:37565"/>
    </ligand>
</feature>
<feature type="binding site" evidence="1">
    <location>
        <begin position="283"/>
        <end position="286"/>
    </location>
    <ligand>
        <name>GTP</name>
        <dbReference type="ChEBI" id="CHEBI:37565"/>
    </ligand>
</feature>
<feature type="binding site" evidence="1">
    <location>
        <begin position="314"/>
        <end position="316"/>
    </location>
    <ligand>
        <name>GTP</name>
        <dbReference type="ChEBI" id="CHEBI:37565"/>
    </ligand>
</feature>
<sequence length="390" mass="43228">MKFVDEASILVVAGDGGNGCVSFRREKYIPKGGPDGGDGGDGGDVWMEADENLNTLIDYRFEKSFRAERGQNGASRDCTGKRGKDVTIKVPVGTRVIDQGTGETMGDMTKHGQRLLVAKGGWHGLGNTRFKSSVNRTPRQKTNGTPGDKRELLLELMLLADVGMLGMPNAGKSTFIRAVSAAKPKVADYPFTTLVPSLGVVRMDNEKSFVVADIPGLIEGAAEGAGLGIRFLKHLERCRVLLHLIDIDPIDGTDPVENARIIISELEKYSQDLAAKPRWLVFNKIDLLDKAEAEEKAKAIAEALGWEDKYYLISAASGLGVKDLCWDVMTFILENPVVQAEEAKQPEKVEFMWDDYHRQQLEEIAEEDDEDWDDDWDEDDEEGVEFIYKR</sequence>
<reference key="1">
    <citation type="journal article" date="2005" name="Nucleic Acids Res.">
        <title>Genome dynamics and diversity of Shigella species, the etiologic agents of bacillary dysentery.</title>
        <authorList>
            <person name="Yang F."/>
            <person name="Yang J."/>
            <person name="Zhang X."/>
            <person name="Chen L."/>
            <person name="Jiang Y."/>
            <person name="Yan Y."/>
            <person name="Tang X."/>
            <person name="Wang J."/>
            <person name="Xiong Z."/>
            <person name="Dong J."/>
            <person name="Xue Y."/>
            <person name="Zhu Y."/>
            <person name="Xu X."/>
            <person name="Sun L."/>
            <person name="Chen S."/>
            <person name="Nie H."/>
            <person name="Peng J."/>
            <person name="Xu J."/>
            <person name="Wang Y."/>
            <person name="Yuan Z."/>
            <person name="Wen Y."/>
            <person name="Yao Z."/>
            <person name="Shen Y."/>
            <person name="Qiang B."/>
            <person name="Hou Y."/>
            <person name="Yu J."/>
            <person name="Jin Q."/>
        </authorList>
    </citation>
    <scope>NUCLEOTIDE SEQUENCE [LARGE SCALE GENOMIC DNA]</scope>
    <source>
        <strain>Ss046</strain>
    </source>
</reference>
<protein>
    <recommendedName>
        <fullName evidence="1">GTPase Obg</fullName>
        <ecNumber evidence="1">3.6.5.-</ecNumber>
    </recommendedName>
    <alternativeName>
        <fullName evidence="1">GTP-binding protein Obg</fullName>
    </alternativeName>
</protein>
<accession>Q3YX58</accession>
<evidence type="ECO:0000255" key="1">
    <source>
        <dbReference type="HAMAP-Rule" id="MF_01454"/>
    </source>
</evidence>
<evidence type="ECO:0000255" key="2">
    <source>
        <dbReference type="PROSITE-ProRule" id="PRU01231"/>
    </source>
</evidence>
<evidence type="ECO:0000256" key="3">
    <source>
        <dbReference type="SAM" id="MobiDB-lite"/>
    </source>
</evidence>
<organism>
    <name type="scientific">Shigella sonnei (strain Ss046)</name>
    <dbReference type="NCBI Taxonomy" id="300269"/>
    <lineage>
        <taxon>Bacteria</taxon>
        <taxon>Pseudomonadati</taxon>
        <taxon>Pseudomonadota</taxon>
        <taxon>Gammaproteobacteria</taxon>
        <taxon>Enterobacterales</taxon>
        <taxon>Enterobacteriaceae</taxon>
        <taxon>Shigella</taxon>
    </lineage>
</organism>
<dbReference type="EC" id="3.6.5.-" evidence="1"/>
<dbReference type="EMBL" id="CP000038">
    <property type="protein sequence ID" value="AAZ89904.1"/>
    <property type="molecule type" value="Genomic_DNA"/>
</dbReference>
<dbReference type="SMR" id="Q3YX58"/>
<dbReference type="KEGG" id="ssn:SSON_3331"/>
<dbReference type="HOGENOM" id="CLU_011747_2_0_6"/>
<dbReference type="Proteomes" id="UP000002529">
    <property type="component" value="Chromosome"/>
</dbReference>
<dbReference type="GO" id="GO:0005737">
    <property type="term" value="C:cytoplasm"/>
    <property type="evidence" value="ECO:0007669"/>
    <property type="project" value="UniProtKB-SubCell"/>
</dbReference>
<dbReference type="GO" id="GO:0005525">
    <property type="term" value="F:GTP binding"/>
    <property type="evidence" value="ECO:0007669"/>
    <property type="project" value="UniProtKB-UniRule"/>
</dbReference>
<dbReference type="GO" id="GO:0003924">
    <property type="term" value="F:GTPase activity"/>
    <property type="evidence" value="ECO:0007669"/>
    <property type="project" value="UniProtKB-UniRule"/>
</dbReference>
<dbReference type="GO" id="GO:0000287">
    <property type="term" value="F:magnesium ion binding"/>
    <property type="evidence" value="ECO:0007669"/>
    <property type="project" value="InterPro"/>
</dbReference>
<dbReference type="GO" id="GO:0042254">
    <property type="term" value="P:ribosome biogenesis"/>
    <property type="evidence" value="ECO:0007669"/>
    <property type="project" value="UniProtKB-UniRule"/>
</dbReference>
<dbReference type="CDD" id="cd01898">
    <property type="entry name" value="Obg"/>
    <property type="match status" value="1"/>
</dbReference>
<dbReference type="FunFam" id="2.70.210.12:FF:000001">
    <property type="entry name" value="GTPase Obg"/>
    <property type="match status" value="1"/>
</dbReference>
<dbReference type="FunFam" id="3.40.50.300:FF:000185">
    <property type="entry name" value="GTPase Obg"/>
    <property type="match status" value="1"/>
</dbReference>
<dbReference type="Gene3D" id="2.70.210.12">
    <property type="entry name" value="GTP1/OBG domain"/>
    <property type="match status" value="1"/>
</dbReference>
<dbReference type="Gene3D" id="3.40.50.300">
    <property type="entry name" value="P-loop containing nucleotide triphosphate hydrolases"/>
    <property type="match status" value="1"/>
</dbReference>
<dbReference type="HAMAP" id="MF_01454">
    <property type="entry name" value="GTPase_Obg"/>
    <property type="match status" value="1"/>
</dbReference>
<dbReference type="InterPro" id="IPR031167">
    <property type="entry name" value="G_OBG"/>
</dbReference>
<dbReference type="InterPro" id="IPR006073">
    <property type="entry name" value="GTP-bd"/>
</dbReference>
<dbReference type="InterPro" id="IPR014100">
    <property type="entry name" value="GTP-bd_Obg/CgtA"/>
</dbReference>
<dbReference type="InterPro" id="IPR006074">
    <property type="entry name" value="GTP1-OBG_CS"/>
</dbReference>
<dbReference type="InterPro" id="IPR006169">
    <property type="entry name" value="GTP1_OBG_dom"/>
</dbReference>
<dbReference type="InterPro" id="IPR036726">
    <property type="entry name" value="GTP1_OBG_dom_sf"/>
</dbReference>
<dbReference type="InterPro" id="IPR045086">
    <property type="entry name" value="OBG_GTPase"/>
</dbReference>
<dbReference type="InterPro" id="IPR027417">
    <property type="entry name" value="P-loop_NTPase"/>
</dbReference>
<dbReference type="NCBIfam" id="TIGR02729">
    <property type="entry name" value="Obg_CgtA"/>
    <property type="match status" value="1"/>
</dbReference>
<dbReference type="NCBIfam" id="NF008955">
    <property type="entry name" value="PRK12297.1"/>
    <property type="match status" value="1"/>
</dbReference>
<dbReference type="NCBIfam" id="NF008956">
    <property type="entry name" value="PRK12299.1"/>
    <property type="match status" value="1"/>
</dbReference>
<dbReference type="PANTHER" id="PTHR11702">
    <property type="entry name" value="DEVELOPMENTALLY REGULATED GTP-BINDING PROTEIN-RELATED"/>
    <property type="match status" value="1"/>
</dbReference>
<dbReference type="PANTHER" id="PTHR11702:SF31">
    <property type="entry name" value="MITOCHONDRIAL RIBOSOME-ASSOCIATED GTPASE 2"/>
    <property type="match status" value="1"/>
</dbReference>
<dbReference type="Pfam" id="PF01018">
    <property type="entry name" value="GTP1_OBG"/>
    <property type="match status" value="1"/>
</dbReference>
<dbReference type="Pfam" id="PF01926">
    <property type="entry name" value="MMR_HSR1"/>
    <property type="match status" value="1"/>
</dbReference>
<dbReference type="PIRSF" id="PIRSF002401">
    <property type="entry name" value="GTP_bd_Obg/CgtA"/>
    <property type="match status" value="1"/>
</dbReference>
<dbReference type="PRINTS" id="PR00326">
    <property type="entry name" value="GTP1OBG"/>
</dbReference>
<dbReference type="SUPFAM" id="SSF82051">
    <property type="entry name" value="Obg GTP-binding protein N-terminal domain"/>
    <property type="match status" value="1"/>
</dbReference>
<dbReference type="SUPFAM" id="SSF52540">
    <property type="entry name" value="P-loop containing nucleoside triphosphate hydrolases"/>
    <property type="match status" value="1"/>
</dbReference>
<dbReference type="PROSITE" id="PS51710">
    <property type="entry name" value="G_OBG"/>
    <property type="match status" value="1"/>
</dbReference>
<dbReference type="PROSITE" id="PS00905">
    <property type="entry name" value="GTP1_OBG"/>
    <property type="match status" value="1"/>
</dbReference>
<dbReference type="PROSITE" id="PS51883">
    <property type="entry name" value="OBG"/>
    <property type="match status" value="1"/>
</dbReference>
<proteinExistence type="inferred from homology"/>
<keyword id="KW-0963">Cytoplasm</keyword>
<keyword id="KW-0342">GTP-binding</keyword>
<keyword id="KW-0378">Hydrolase</keyword>
<keyword id="KW-0460">Magnesium</keyword>
<keyword id="KW-0479">Metal-binding</keyword>
<keyword id="KW-0547">Nucleotide-binding</keyword>
<keyword id="KW-1185">Reference proteome</keyword>
<name>OBG_SHISS</name>
<gene>
    <name evidence="1" type="primary">obg</name>
    <name type="ordered locus">SSON_3331</name>
</gene>
<comment type="function">
    <text evidence="1">An essential GTPase which binds GTP, GDP and possibly (p)ppGpp with moderate affinity, with high nucleotide exchange rates and a fairly low GTP hydrolysis rate. Plays a role in control of the cell cycle, stress response, ribosome biogenesis and in those bacteria that undergo differentiation, in morphogenesis control.</text>
</comment>
<comment type="cofactor">
    <cofactor evidence="1">
        <name>Mg(2+)</name>
        <dbReference type="ChEBI" id="CHEBI:18420"/>
    </cofactor>
</comment>
<comment type="subunit">
    <text evidence="1">Monomer.</text>
</comment>
<comment type="subcellular location">
    <subcellularLocation>
        <location evidence="1">Cytoplasm</location>
    </subcellularLocation>
</comment>
<comment type="similarity">
    <text evidence="1">Belongs to the TRAFAC class OBG-HflX-like GTPase superfamily. OBG GTPase family.</text>
</comment>